<protein>
    <recommendedName>
        <fullName evidence="2">Meiosis regulator and mRNA stability factor 1</fullName>
    </recommendedName>
    <alternativeName>
        <fullName>Limkain-b1</fullName>
    </alternativeName>
    <alternativeName>
        <fullName evidence="2">Meiosis arrest female protein 1 homolog</fullName>
    </alternativeName>
</protein>
<feature type="chain" id="PRO_0000417529" description="Meiosis regulator and mRNA stability factor 1">
    <location>
        <begin position="1"/>
        <end position="1681"/>
    </location>
</feature>
<feature type="domain" description="NYN">
    <location>
        <begin position="340"/>
        <end position="477"/>
    </location>
</feature>
<feature type="domain" description="RRM" evidence="3">
    <location>
        <begin position="779"/>
        <end position="858"/>
    </location>
</feature>
<feature type="domain" description="HTH OST-type 1" evidence="4">
    <location>
        <begin position="863"/>
        <end position="937"/>
    </location>
</feature>
<feature type="domain" description="HTH OST-type 2" evidence="4">
    <location>
        <begin position="991"/>
        <end position="1067"/>
    </location>
</feature>
<feature type="domain" description="HTH OST-type 3" evidence="4">
    <location>
        <begin position="1087"/>
        <end position="1161"/>
    </location>
</feature>
<feature type="domain" description="HTH OST-type 4" evidence="4">
    <location>
        <begin position="1163"/>
        <end position="1238"/>
    </location>
</feature>
<feature type="domain" description="HTH OST-type 5" evidence="4">
    <location>
        <begin position="1247"/>
        <end position="1321"/>
    </location>
</feature>
<feature type="domain" description="HTH OST-type 6" evidence="4">
    <location>
        <begin position="1323"/>
        <end position="1398"/>
    </location>
</feature>
<feature type="domain" description="HTH OST-type 7" evidence="4">
    <location>
        <begin position="1399"/>
        <end position="1472"/>
    </location>
</feature>
<feature type="domain" description="HTH OST-type 8" evidence="4">
    <location>
        <begin position="1474"/>
        <end position="1548"/>
    </location>
</feature>
<feature type="region of interest" description="Disordered" evidence="5">
    <location>
        <begin position="576"/>
        <end position="595"/>
    </location>
</feature>
<feature type="region of interest" description="Disordered" evidence="5">
    <location>
        <begin position="638"/>
        <end position="717"/>
    </location>
</feature>
<feature type="region of interest" description="Disordered" evidence="5">
    <location>
        <begin position="1637"/>
        <end position="1662"/>
    </location>
</feature>
<feature type="compositionally biased region" description="Polar residues" evidence="5">
    <location>
        <begin position="638"/>
        <end position="647"/>
    </location>
</feature>
<feature type="compositionally biased region" description="Basic and acidic residues" evidence="5">
    <location>
        <begin position="648"/>
        <end position="658"/>
    </location>
</feature>
<feature type="compositionally biased region" description="Polar residues" evidence="5">
    <location>
        <begin position="659"/>
        <end position="690"/>
    </location>
</feature>
<feature type="compositionally biased region" description="Basic and acidic residues" evidence="5">
    <location>
        <begin position="692"/>
        <end position="715"/>
    </location>
</feature>
<feature type="compositionally biased region" description="Polar residues" evidence="5">
    <location>
        <begin position="1637"/>
        <end position="1648"/>
    </location>
</feature>
<feature type="compositionally biased region" description="Basic and acidic residues" evidence="5">
    <location>
        <begin position="1649"/>
        <end position="1659"/>
    </location>
</feature>
<reference key="1">
    <citation type="journal article" date="2010" name="Science">
        <title>The genome of the Western clawed frog Xenopus tropicalis.</title>
        <authorList>
            <person name="Hellsten U."/>
            <person name="Harland R.M."/>
            <person name="Gilchrist M.J."/>
            <person name="Hendrix D."/>
            <person name="Jurka J."/>
            <person name="Kapitonov V."/>
            <person name="Ovcharenko I."/>
            <person name="Putnam N.H."/>
            <person name="Shu S."/>
            <person name="Taher L."/>
            <person name="Blitz I.L."/>
            <person name="Blumberg B."/>
            <person name="Dichmann D.S."/>
            <person name="Dubchak I."/>
            <person name="Amaya E."/>
            <person name="Detter J.C."/>
            <person name="Fletcher R."/>
            <person name="Gerhard D.S."/>
            <person name="Goodstein D."/>
            <person name="Graves T."/>
            <person name="Grigoriev I.V."/>
            <person name="Grimwood J."/>
            <person name="Kawashima T."/>
            <person name="Lindquist E."/>
            <person name="Lucas S.M."/>
            <person name="Mead P.E."/>
            <person name="Mitros T."/>
            <person name="Ogino H."/>
            <person name="Ohta Y."/>
            <person name="Poliakov A.V."/>
            <person name="Pollet N."/>
            <person name="Robert J."/>
            <person name="Salamov A."/>
            <person name="Sater A.K."/>
            <person name="Schmutz J."/>
            <person name="Terry A."/>
            <person name="Vize P.D."/>
            <person name="Warren W.C."/>
            <person name="Wells D."/>
            <person name="Wills A."/>
            <person name="Wilson R.K."/>
            <person name="Zimmerman L.B."/>
            <person name="Zorn A.M."/>
            <person name="Grainger R."/>
            <person name="Grammer T."/>
            <person name="Khokha M.K."/>
            <person name="Richardson P.M."/>
            <person name="Rokhsar D.S."/>
        </authorList>
    </citation>
    <scope>NUCLEOTIDE SEQUENCE [LARGE SCALE GENOMIC DNA]</scope>
</reference>
<reference key="2">
    <citation type="submission" date="2008-04" db="EMBL/GenBank/DDBJ databases">
        <authorList>
            <consortium name="NIH - Xenopus Gene Collection (XGC) project"/>
        </authorList>
    </citation>
    <scope>NUCLEOTIDE SEQUENCE [LARGE SCALE MRNA]</scope>
    <source>
        <tissue>Testis</tissue>
    </source>
</reference>
<proteinExistence type="evidence at transcript level"/>
<name>MARF1_XENTR</name>
<accession>B2GUN4</accession>
<organism>
    <name type="scientific">Xenopus tropicalis</name>
    <name type="common">Western clawed frog</name>
    <name type="synonym">Silurana tropicalis</name>
    <dbReference type="NCBI Taxonomy" id="8364"/>
    <lineage>
        <taxon>Eukaryota</taxon>
        <taxon>Metazoa</taxon>
        <taxon>Chordata</taxon>
        <taxon>Craniata</taxon>
        <taxon>Vertebrata</taxon>
        <taxon>Euteleostomi</taxon>
        <taxon>Amphibia</taxon>
        <taxon>Batrachia</taxon>
        <taxon>Anura</taxon>
        <taxon>Pipoidea</taxon>
        <taxon>Pipidae</taxon>
        <taxon>Xenopodinae</taxon>
        <taxon>Xenopus</taxon>
        <taxon>Silurana</taxon>
    </lineage>
</organism>
<gene>
    <name evidence="2" type="primary">marf1</name>
    <name type="synonym">lkap</name>
</gene>
<sequence>MEGNETANLCSKSVGWLQKQDKDVEPWLWKLSNCFSTLTQSLPSAGGNPKDYMEHPKPKVELKDVPPPPPPVKPCKNIFPTVPLPKIQPPALPAVQHQTGPKVSCCVLCSNSTSCAPEIRCSGGGYIHPNTILDTGTVTCQVAPGLSFAPESPFKKASSTSTFVPRSAGFSNLCLENRLSPCQCHSQPAPCYSKVHLNPFHGDHPRFQVPALGTSPSYFTSGLSQHVENHLAQSEYLSHYCTSSLHFNTPSSAFLKGPHFCNVCFEKPSSSKVTDSHKIWPNIPPPNTSSAPIPICNGCGTQETVKEAALILAKNLCKASQKYGSPDLATGQMQENLPPIGVFWDIENCSVPSGRSAVTVVKRIRERLFKGHREAEFICVCDISKENKEVIEELNNCQVTVAHINATAKNAADDKLRQSLRRFADTHTSPATVVLVSTDVNFALELSDLRHRHSFHIILIHKNQASEALLHHAHELIHFEEFISDLPPRLPIKMQQCQTLLYVYNLPTNRDAKSISNRLRRLSDNCGGKVMSISGTSAILRFANQESAERAQKRMENEDVFGNRITVSFTPRNKEVNETKNSCVSNEKAKSPKKVNKNTKLCLSIKDDSSSNTKAASKSACGSVSKNSNVKSLKELCQMQSKSNKTSQQEKDKKRNGDKQGTLSQSSPLCTNQMLQTARNVGTDNTASKSFQKRDDTTRKSNADSQKEQKNKEDVVFQISNPSAFSKLTESRQASPFCSSQSGWSSRSLSPSLSNCSSPIATNQTGAADNSVDPFANGADIQIGNLDYRMSRKELQQTLHDIFSRHGKIKNVELSPHTDYQLKATVQMENLQEAICAVNSLHRYKIGSKRIQVSLATGATNKSLSLLSFGTVSILQDAPACCLPLFKFTEIYEKKFGHKLIVSDLYRLTDTVTIRDQGNGRLVCLLPSVQARQSPMGSSQSHDGSSANCSPVVFEELEYHEPICRRHCSNRKFSGHDFDPDSYIIPFVIISLKTFAPQVHSLLQTHEGTVPLLSFPDCYAAEFSALKEVQEGQGGVPLEHLITCIPGVNIAFAQNGIKVVKWIHNKPPPPNSDPWLLRSKSPVGNPQLIQFSREVIDLLKNQPSCIMPVTKFIPTYHHHFAKQCRVSDYGYSKLLELLEAVPHVLQILGMGSKRLLTLTHRAQVKRFTQDLLKLLKSQASKQVIVREFSQAYHWCFSRDWNVTEYGVCDLVDIVSEIPDTTICVSQQDGESVISIPKRERTPEEVERTKQFSKEVVDLLRHQPHFRMPFNKFIPSYHHHFGRQCKLTYYGFTKLLDLFEAIPDVLQVLECGEEKILALTEMERIKALASQLVKLLRSQKDSSINMPDLLTEYSKTFGYSLRLHDYDVSSVPALMQKLCHVVKIMDTDLGKQIQLINRKSLRSLTAQLLILLMSWDESSSLTVEQLCQVYQSVHGIPLNPCEYGFVSLAELLKSLPYLVEVHTNDLCEDSVQLTSLYVFAKNVRSLLHTYHYQQIFLHEFPNAYSKYVGEVLQPKQYGYSSLEEILGAIPQVVWIKGHGHKRIVVLKNDMKVCHQMDKELLCLTSPMDLLCGPVPSCLPSPQLHPDPVVTQPADLIQFEEHFHFSDLVYPEETQYNPLCNGTQPCNFPTSADLDTFSEPSTQNICPQESKSTKELPESPVKRQHRNRVKLAANFSFAPVTKL</sequence>
<dbReference type="EMBL" id="AAMC01072831">
    <property type="status" value="NOT_ANNOTATED_CDS"/>
    <property type="molecule type" value="Genomic_DNA"/>
</dbReference>
<dbReference type="EMBL" id="BC166346">
    <property type="protein sequence ID" value="AAI66346.1"/>
    <property type="molecule type" value="mRNA"/>
</dbReference>
<dbReference type="EMBL" id="BC168127">
    <property type="protein sequence ID" value="AAI68127.1"/>
    <property type="molecule type" value="mRNA"/>
</dbReference>
<dbReference type="RefSeq" id="NP_001119538.1">
    <property type="nucleotide sequence ID" value="NM_001126066.1"/>
</dbReference>
<dbReference type="SMR" id="B2GUN4"/>
<dbReference type="FunCoup" id="B2GUN4">
    <property type="interactions" value="3842"/>
</dbReference>
<dbReference type="STRING" id="8364.ENSXETP00000052982"/>
<dbReference type="PaxDb" id="8364-ENSXETP00000012160"/>
<dbReference type="GeneID" id="733745"/>
<dbReference type="KEGG" id="xtr:733745"/>
<dbReference type="AGR" id="Xenbase:XB-GENE-990483"/>
<dbReference type="CTD" id="9665"/>
<dbReference type="Xenbase" id="XB-GENE-990483">
    <property type="gene designation" value="marf1"/>
</dbReference>
<dbReference type="eggNOG" id="ENOG502QUYZ">
    <property type="taxonomic scope" value="Eukaryota"/>
</dbReference>
<dbReference type="HOGENOM" id="CLU_002701_0_0_1"/>
<dbReference type="InParanoid" id="B2GUN4"/>
<dbReference type="OrthoDB" id="549353at2759"/>
<dbReference type="TreeFam" id="TF329117"/>
<dbReference type="Proteomes" id="UP000008143">
    <property type="component" value="Chromosome 9"/>
</dbReference>
<dbReference type="GO" id="GO:0005777">
    <property type="term" value="C:peroxisome"/>
    <property type="evidence" value="ECO:0007669"/>
    <property type="project" value="UniProtKB-SubCell"/>
</dbReference>
<dbReference type="GO" id="GO:0003723">
    <property type="term" value="F:RNA binding"/>
    <property type="evidence" value="ECO:0007669"/>
    <property type="project" value="UniProtKB-KW"/>
</dbReference>
<dbReference type="GO" id="GO:0004540">
    <property type="term" value="F:RNA nuclease activity"/>
    <property type="evidence" value="ECO:0007669"/>
    <property type="project" value="InterPro"/>
</dbReference>
<dbReference type="GO" id="GO:0051321">
    <property type="term" value="P:meiotic cell cycle"/>
    <property type="evidence" value="ECO:0007669"/>
    <property type="project" value="UniProtKB-KW"/>
</dbReference>
<dbReference type="GO" id="GO:0048477">
    <property type="term" value="P:oogenesis"/>
    <property type="evidence" value="ECO:0007669"/>
    <property type="project" value="UniProtKB-KW"/>
</dbReference>
<dbReference type="GO" id="GO:0010468">
    <property type="term" value="P:regulation of gene expression"/>
    <property type="evidence" value="ECO:0007669"/>
    <property type="project" value="InterPro"/>
</dbReference>
<dbReference type="CDD" id="cd09977">
    <property type="entry name" value="LOTUS_1_Limkain_b1"/>
    <property type="match status" value="1"/>
</dbReference>
<dbReference type="CDD" id="cd09978">
    <property type="entry name" value="LOTUS_2_Limkain_b1"/>
    <property type="match status" value="1"/>
</dbReference>
<dbReference type="CDD" id="cd09979">
    <property type="entry name" value="LOTUS_3_Limkain_b1"/>
    <property type="match status" value="1"/>
</dbReference>
<dbReference type="CDD" id="cd09980">
    <property type="entry name" value="LOTUS_4_Limkain_b1"/>
    <property type="match status" value="1"/>
</dbReference>
<dbReference type="CDD" id="cd09981">
    <property type="entry name" value="LOTUS_5_Limkain_b1"/>
    <property type="match status" value="1"/>
</dbReference>
<dbReference type="CDD" id="cd09982">
    <property type="entry name" value="LOTUS_6_Limkain_b1"/>
    <property type="match status" value="1"/>
</dbReference>
<dbReference type="CDD" id="cd09983">
    <property type="entry name" value="LOTUS_7_Limkain_b1"/>
    <property type="match status" value="1"/>
</dbReference>
<dbReference type="CDD" id="cd09984">
    <property type="entry name" value="LOTUS_8_Limkain_b1"/>
    <property type="match status" value="1"/>
</dbReference>
<dbReference type="CDD" id="cd10910">
    <property type="entry name" value="PIN_limkain_b1_N_like"/>
    <property type="match status" value="1"/>
</dbReference>
<dbReference type="CDD" id="cd12255">
    <property type="entry name" value="RRM1_LKAP"/>
    <property type="match status" value="1"/>
</dbReference>
<dbReference type="CDD" id="cd12256">
    <property type="entry name" value="RRM2_LKAP"/>
    <property type="match status" value="1"/>
</dbReference>
<dbReference type="FunFam" id="3.30.420.610:FF:000001">
    <property type="entry name" value="Meiosis regulator and mRNA stability factor 1"/>
    <property type="match status" value="2"/>
</dbReference>
<dbReference type="Gene3D" id="3.30.70.330">
    <property type="match status" value="2"/>
</dbReference>
<dbReference type="Gene3D" id="3.40.50.1010">
    <property type="entry name" value="5'-nuclease"/>
    <property type="match status" value="1"/>
</dbReference>
<dbReference type="Gene3D" id="3.30.420.610">
    <property type="entry name" value="LOTUS domain-like"/>
    <property type="match status" value="6"/>
</dbReference>
<dbReference type="InterPro" id="IPR041966">
    <property type="entry name" value="LOTUS-like"/>
</dbReference>
<dbReference type="InterPro" id="IPR024768">
    <property type="entry name" value="Marf1"/>
</dbReference>
<dbReference type="InterPro" id="IPR045602">
    <property type="entry name" value="MARF1_LOTUS"/>
</dbReference>
<dbReference type="InterPro" id="IPR034189">
    <property type="entry name" value="MARF1_RRM1"/>
</dbReference>
<dbReference type="InterPro" id="IPR034191">
    <property type="entry name" value="MARF1_RRM2"/>
</dbReference>
<dbReference type="InterPro" id="IPR012677">
    <property type="entry name" value="Nucleotide-bd_a/b_plait_sf"/>
</dbReference>
<dbReference type="InterPro" id="IPR021139">
    <property type="entry name" value="NYN"/>
</dbReference>
<dbReference type="InterPro" id="IPR025605">
    <property type="entry name" value="OST-HTH/LOTUS_dom"/>
</dbReference>
<dbReference type="InterPro" id="IPR035979">
    <property type="entry name" value="RBD_domain_sf"/>
</dbReference>
<dbReference type="InterPro" id="IPR000504">
    <property type="entry name" value="RRM_dom"/>
</dbReference>
<dbReference type="PANTHER" id="PTHR14379">
    <property type="entry name" value="LIMKAIN B LKAP"/>
    <property type="match status" value="1"/>
</dbReference>
<dbReference type="PANTHER" id="PTHR14379:SF3">
    <property type="entry name" value="MEIOSIS REGULATOR AND MRNA STABILITY FACTOR 1"/>
    <property type="match status" value="1"/>
</dbReference>
<dbReference type="Pfam" id="PF19687">
    <property type="entry name" value="MARF1_LOTUS"/>
    <property type="match status" value="1"/>
</dbReference>
<dbReference type="Pfam" id="PF01936">
    <property type="entry name" value="NYN"/>
    <property type="match status" value="1"/>
</dbReference>
<dbReference type="Pfam" id="PF12872">
    <property type="entry name" value="OST-HTH"/>
    <property type="match status" value="5"/>
</dbReference>
<dbReference type="Pfam" id="PF00076">
    <property type="entry name" value="RRM_1"/>
    <property type="match status" value="1"/>
</dbReference>
<dbReference type="Pfam" id="PF11608">
    <property type="entry name" value="RRM_MARF1"/>
    <property type="match status" value="1"/>
</dbReference>
<dbReference type="SMART" id="SM00360">
    <property type="entry name" value="RRM"/>
    <property type="match status" value="2"/>
</dbReference>
<dbReference type="SUPFAM" id="SSF54928">
    <property type="entry name" value="RNA-binding domain, RBD"/>
    <property type="match status" value="2"/>
</dbReference>
<dbReference type="PROSITE" id="PS51644">
    <property type="entry name" value="HTH_OST"/>
    <property type="match status" value="8"/>
</dbReference>
<dbReference type="PROSITE" id="PS50102">
    <property type="entry name" value="RRM"/>
    <property type="match status" value="2"/>
</dbReference>
<evidence type="ECO:0000250" key="1"/>
<evidence type="ECO:0000250" key="2">
    <source>
        <dbReference type="UniProtKB" id="Q9Y4F3"/>
    </source>
</evidence>
<evidence type="ECO:0000255" key="3">
    <source>
        <dbReference type="PROSITE-ProRule" id="PRU00176"/>
    </source>
</evidence>
<evidence type="ECO:0000255" key="4">
    <source>
        <dbReference type="PROSITE-ProRule" id="PRU00975"/>
    </source>
</evidence>
<evidence type="ECO:0000256" key="5">
    <source>
        <dbReference type="SAM" id="MobiDB-lite"/>
    </source>
</evidence>
<comment type="function">
    <text evidence="1">Essential regulator of oogenesis required for female meiotic progression to repress transposable elements and preventing their mobilization, which is essential for the germline integrity.</text>
</comment>
<comment type="subcellular location">
    <subcellularLocation>
        <location evidence="1">Peroxisome</location>
    </subcellularLocation>
</comment>
<keyword id="KW-0221">Differentiation</keyword>
<keyword id="KW-0469">Meiosis</keyword>
<keyword id="KW-0896">Oogenesis</keyword>
<keyword id="KW-0576">Peroxisome</keyword>
<keyword id="KW-1185">Reference proteome</keyword>
<keyword id="KW-0677">Repeat</keyword>
<keyword id="KW-0694">RNA-binding</keyword>